<sequence>MESMFEDDISILTQEALGPSEVWLDGPGDPSLGGDMCSASHFALITAYGDIKERLGGLERENATLRRRLKVYEIKYPLITDFGEEHGFPLYELKDGSLLEVEKVSLQQRLNQFQHELQKSKEQEEQLGEMIQAYEKLCVEKSDLETELGEMRALVETHLRQICGLEKQLQQQQGLRDAAFSSLSPPAVPASACPDLDLHYLALRGGPALGHAGWPGPTSVSVSELERRRLEEALEAAQGEARGAQLREEQLQAECERLQGELKQLQETRAQDLASNQSECDMAWVKRVGDDQVNLALAYTELTEELGRLRELSSLQGRILRTLLQEQARNAGQRHSPLSQRHSPAPACPSPSPPARPPPCAPCQSPAAQRRSPVPPCPSPQQRRSPASPSCPSPVPQRRSPVPPSCQSPSPQRRSPVPPSCPAPQPRPPPPPGERTLAERVYAKPPSHHAKAGFQGRRSYSELAEGAAYAGASPAWLQAEAATLPKPRAYGGELYGRPLSPRRAFEGIRLRFEKQPSEEEEWAMPASPPSPEAGTIRCASFCAGFPIPESPAATAYAHAEHAQSWPSINLLMETVGSDIRSCPLCQLGFPVGYPDDALIKHIDSHLENSKI</sequence>
<gene>
    <name evidence="11" type="primary">Tbkbp1</name>
    <name evidence="8" type="synonym">Sintbad</name>
</gene>
<accession>A2A9T0</accession>
<accession>A2A9S9</accession>
<accession>Q6PFF1</accession>
<keyword id="KW-0025">Alternative splicing</keyword>
<keyword id="KW-0175">Coiled coil</keyword>
<keyword id="KW-0391">Immunity</keyword>
<keyword id="KW-0399">Innate immunity</keyword>
<keyword id="KW-0479">Metal-binding</keyword>
<keyword id="KW-0597">Phosphoprotein</keyword>
<keyword id="KW-1185">Reference proteome</keyword>
<keyword id="KW-0862">Zinc</keyword>
<keyword id="KW-0863">Zinc-finger</keyword>
<proteinExistence type="evidence at protein level"/>
<reference key="1">
    <citation type="journal article" date="2009" name="PLoS Biol.">
        <title>Lineage-specific biology revealed by a finished genome assembly of the mouse.</title>
        <authorList>
            <person name="Church D.M."/>
            <person name="Goodstadt L."/>
            <person name="Hillier L.W."/>
            <person name="Zody M.C."/>
            <person name="Goldstein S."/>
            <person name="She X."/>
            <person name="Bult C.J."/>
            <person name="Agarwala R."/>
            <person name="Cherry J.L."/>
            <person name="DiCuccio M."/>
            <person name="Hlavina W."/>
            <person name="Kapustin Y."/>
            <person name="Meric P."/>
            <person name="Maglott D."/>
            <person name="Birtle Z."/>
            <person name="Marques A.C."/>
            <person name="Graves T."/>
            <person name="Zhou S."/>
            <person name="Teague B."/>
            <person name="Potamousis K."/>
            <person name="Churas C."/>
            <person name="Place M."/>
            <person name="Herschleb J."/>
            <person name="Runnheim R."/>
            <person name="Forrest D."/>
            <person name="Amos-Landgraf J."/>
            <person name="Schwartz D.C."/>
            <person name="Cheng Z."/>
            <person name="Lindblad-Toh K."/>
            <person name="Eichler E.E."/>
            <person name="Ponting C.P."/>
        </authorList>
    </citation>
    <scope>NUCLEOTIDE SEQUENCE [LARGE SCALE GENOMIC DNA]</scope>
    <source>
        <strain>C57BL/6J</strain>
    </source>
</reference>
<reference evidence="9 10" key="2">
    <citation type="journal article" date="2004" name="Genome Res.">
        <title>The status, quality, and expansion of the NIH full-length cDNA project: the Mammalian Gene Collection (MGC).</title>
        <authorList>
            <consortium name="The MGC Project Team"/>
        </authorList>
    </citation>
    <scope>NUCLEOTIDE SEQUENCE [LARGE SCALE MRNA] (ISOFORM 2)</scope>
    <source>
        <strain evidence="10">C57BL/6J</strain>
        <tissue evidence="10">Brain</tissue>
    </source>
</reference>
<reference evidence="9" key="3">
    <citation type="journal article" date="2007" name="EMBO J.">
        <title>SINTBAD, a novel component of innate antiviral immunity, shares a TBK1-binding domain with NAP1 and TANK.</title>
        <authorList>
            <person name="Ryzhakov G."/>
            <person name="Randow F."/>
        </authorList>
    </citation>
    <scope>FUNCTION</scope>
    <scope>INTERACTION WITH TBK1 AND IKBKE</scope>
    <scope>HOMODIMER</scope>
</reference>
<reference key="4">
    <citation type="journal article" date="2010" name="Cell">
        <title>A tissue-specific atlas of mouse protein phosphorylation and expression.</title>
        <authorList>
            <person name="Huttlin E.L."/>
            <person name="Jedrychowski M.P."/>
            <person name="Elias J.E."/>
            <person name="Goswami T."/>
            <person name="Rad R."/>
            <person name="Beausoleil S.A."/>
            <person name="Villen J."/>
            <person name="Haas W."/>
            <person name="Sowa M.E."/>
            <person name="Gygi S.P."/>
        </authorList>
    </citation>
    <scope>PHOSPHORYLATION [LARGE SCALE ANALYSIS] AT SER-400</scope>
    <scope>IDENTIFICATION BY MASS SPECTROMETRY [LARGE SCALE ANALYSIS]</scope>
    <source>
        <tissue>Lung</tissue>
    </source>
</reference>
<dbReference type="EMBL" id="AL627445">
    <property type="status" value="NOT_ANNOTATED_CDS"/>
    <property type="molecule type" value="Genomic_DNA"/>
</dbReference>
<dbReference type="EMBL" id="BC057590">
    <property type="protein sequence ID" value="AAH57590.1"/>
    <property type="molecule type" value="mRNA"/>
</dbReference>
<dbReference type="CCDS" id="CCDS88239.1">
    <molecule id="A2A9T0-1"/>
</dbReference>
<dbReference type="RefSeq" id="NP_001359458.1">
    <molecule id="A2A9T0-1"/>
    <property type="nucleotide sequence ID" value="NM_001372529.1"/>
</dbReference>
<dbReference type="RefSeq" id="NP_001359459.1">
    <molecule id="A2A9T0-1"/>
    <property type="nucleotide sequence ID" value="NM_001372530.1"/>
</dbReference>
<dbReference type="RefSeq" id="NP_001359460.1">
    <molecule id="A2A9T0-1"/>
    <property type="nucleotide sequence ID" value="NM_001372531.1"/>
</dbReference>
<dbReference type="RefSeq" id="NP_932768.2">
    <property type="nucleotide sequence ID" value="NM_198100.2"/>
</dbReference>
<dbReference type="RefSeq" id="XP_006534398.1">
    <property type="nucleotide sequence ID" value="XM_006534335.1"/>
</dbReference>
<dbReference type="RefSeq" id="XP_006534399.1">
    <property type="nucleotide sequence ID" value="XM_006534336.2"/>
</dbReference>
<dbReference type="RefSeq" id="XP_006534400.1">
    <property type="nucleotide sequence ID" value="XM_006534337.2"/>
</dbReference>
<dbReference type="SMR" id="A2A9T0"/>
<dbReference type="BioGRID" id="215817">
    <property type="interactions" value="4"/>
</dbReference>
<dbReference type="CORUM" id="A2A9T0"/>
<dbReference type="FunCoup" id="A2A9T0">
    <property type="interactions" value="627"/>
</dbReference>
<dbReference type="IntAct" id="A2A9T0">
    <property type="interactions" value="1"/>
</dbReference>
<dbReference type="MINT" id="A2A9T0"/>
<dbReference type="STRING" id="10090.ENSMUSP00000103240"/>
<dbReference type="GlyGen" id="A2A9T0">
    <property type="glycosylation" value="1 site"/>
</dbReference>
<dbReference type="iPTMnet" id="A2A9T0"/>
<dbReference type="PhosphoSitePlus" id="A2A9T0"/>
<dbReference type="PaxDb" id="10090-ENSMUSP00000103240"/>
<dbReference type="ProteomicsDB" id="254830">
    <molecule id="A2A9T0-1"/>
</dbReference>
<dbReference type="ProteomicsDB" id="254831">
    <molecule id="A2A9T0-2"/>
</dbReference>
<dbReference type="Antibodypedia" id="30174">
    <property type="antibodies" value="154 antibodies from 26 providers"/>
</dbReference>
<dbReference type="DNASU" id="73174"/>
<dbReference type="Ensembl" id="ENSMUST00000066078.12">
    <molecule id="A2A9T0-1"/>
    <property type="protein sequence ID" value="ENSMUSP00000065461.6"/>
    <property type="gene ID" value="ENSMUSG00000038517.16"/>
</dbReference>
<dbReference type="Ensembl" id="ENSMUST00000107614.8">
    <molecule id="A2A9T0-1"/>
    <property type="protein sequence ID" value="ENSMUSP00000103239.2"/>
    <property type="gene ID" value="ENSMUSG00000038517.16"/>
</dbReference>
<dbReference type="GeneID" id="73174"/>
<dbReference type="KEGG" id="mmu:73174"/>
<dbReference type="AGR" id="MGI:1920424"/>
<dbReference type="CTD" id="9755"/>
<dbReference type="MGI" id="MGI:1920424">
    <property type="gene designation" value="Tbkbp1"/>
</dbReference>
<dbReference type="VEuPathDB" id="HostDB:ENSMUSG00000038517"/>
<dbReference type="eggNOG" id="ENOG502QVP4">
    <property type="taxonomic scope" value="Eukaryota"/>
</dbReference>
<dbReference type="GeneTree" id="ENSGT00940000153704"/>
<dbReference type="InParanoid" id="A2A9T0"/>
<dbReference type="OMA" id="CHPQQGY"/>
<dbReference type="OrthoDB" id="8796075at2759"/>
<dbReference type="PhylomeDB" id="A2A9T0"/>
<dbReference type="TreeFam" id="TF331289"/>
<dbReference type="BioGRID-ORCS" id="73174">
    <property type="hits" value="5 hits in 77 CRISPR screens"/>
</dbReference>
<dbReference type="PRO" id="PR:A2A9T0"/>
<dbReference type="Proteomes" id="UP000000589">
    <property type="component" value="Chromosome 11"/>
</dbReference>
<dbReference type="RNAct" id="A2A9T0">
    <property type="molecule type" value="protein"/>
</dbReference>
<dbReference type="Bgee" id="ENSMUSG00000038517">
    <property type="expression patterns" value="Expressed in granulocyte and 185 other cell types or tissues"/>
</dbReference>
<dbReference type="ExpressionAtlas" id="A2A9T0">
    <property type="expression patterns" value="baseline and differential"/>
</dbReference>
<dbReference type="GO" id="GO:0008270">
    <property type="term" value="F:zinc ion binding"/>
    <property type="evidence" value="ECO:0007669"/>
    <property type="project" value="UniProtKB-KW"/>
</dbReference>
<dbReference type="GO" id="GO:0045087">
    <property type="term" value="P:innate immune response"/>
    <property type="evidence" value="ECO:0007669"/>
    <property type="project" value="UniProtKB-KW"/>
</dbReference>
<dbReference type="InterPro" id="IPR041641">
    <property type="entry name" value="CALCOCO1/2_Zn_UBZ1"/>
</dbReference>
<dbReference type="InterPro" id="IPR024581">
    <property type="entry name" value="TBD"/>
</dbReference>
<dbReference type="InterPro" id="IPR051891">
    <property type="entry name" value="TBK1-IKBKE_adapters"/>
</dbReference>
<dbReference type="PANTHER" id="PTHR14432">
    <property type="entry name" value="PROSAPIP2 PROTEIN/5-AZACYTIDINE INDUCED GENE 2"/>
    <property type="match status" value="1"/>
</dbReference>
<dbReference type="PANTHER" id="PTHR14432:SF2">
    <property type="entry name" value="TANK-BINDING KINASE 1-BINDING PROTEIN 1"/>
    <property type="match status" value="1"/>
</dbReference>
<dbReference type="Pfam" id="PF12845">
    <property type="entry name" value="TBD"/>
    <property type="match status" value="1"/>
</dbReference>
<dbReference type="PROSITE" id="PS51905">
    <property type="entry name" value="ZF_UBZ1"/>
    <property type="match status" value="1"/>
</dbReference>
<evidence type="ECO:0000250" key="1">
    <source>
        <dbReference type="UniProtKB" id="A7MCY6"/>
    </source>
</evidence>
<evidence type="ECO:0000255" key="2"/>
<evidence type="ECO:0000255" key="3">
    <source>
        <dbReference type="PROSITE-ProRule" id="PRU01253"/>
    </source>
</evidence>
<evidence type="ECO:0000256" key="4">
    <source>
        <dbReference type="SAM" id="MobiDB-lite"/>
    </source>
</evidence>
<evidence type="ECO:0000269" key="5">
    <source>
    </source>
</evidence>
<evidence type="ECO:0000269" key="6">
    <source>
    </source>
</evidence>
<evidence type="ECO:0000303" key="7">
    <source>
    </source>
</evidence>
<evidence type="ECO:0000303" key="8">
    <source>
    </source>
</evidence>
<evidence type="ECO:0000305" key="9"/>
<evidence type="ECO:0000312" key="10">
    <source>
        <dbReference type="EMBL" id="AAH57590.1"/>
    </source>
</evidence>
<evidence type="ECO:0000312" key="11">
    <source>
        <dbReference type="MGI" id="MGI:1920424"/>
    </source>
</evidence>
<evidence type="ECO:0007744" key="12">
    <source>
    </source>
</evidence>
<protein>
    <recommendedName>
        <fullName>TANK-binding kinase 1-binding protein 1</fullName>
        <shortName>TBK1-binding protein 1</shortName>
    </recommendedName>
    <alternativeName>
        <fullName>Similar to NAP1 TBK1 adapter</fullName>
    </alternativeName>
</protein>
<organism>
    <name type="scientific">Mus musculus</name>
    <name type="common">Mouse</name>
    <dbReference type="NCBI Taxonomy" id="10090"/>
    <lineage>
        <taxon>Eukaryota</taxon>
        <taxon>Metazoa</taxon>
        <taxon>Chordata</taxon>
        <taxon>Craniata</taxon>
        <taxon>Vertebrata</taxon>
        <taxon>Euteleostomi</taxon>
        <taxon>Mammalia</taxon>
        <taxon>Eutheria</taxon>
        <taxon>Euarchontoglires</taxon>
        <taxon>Glires</taxon>
        <taxon>Rodentia</taxon>
        <taxon>Myomorpha</taxon>
        <taxon>Muroidea</taxon>
        <taxon>Muridae</taxon>
        <taxon>Murinae</taxon>
        <taxon>Mus</taxon>
        <taxon>Mus</taxon>
    </lineage>
</organism>
<comment type="function">
    <text evidence="6">Adapter protein which constitutively binds TBK1 and IKBKE playing a role in antiviral innate immunity. Essential for the efficient induction of IRF-dependent transcription following infection with Sendai virus.</text>
</comment>
<comment type="subunit">
    <text evidence="1 6">Homodimer (PubMed:17568778). May form a heterodimer with NAP1. Interacts with TKB1 and IKBKE (PubMed:17568778). Weakly interacts with DDX3X (By similarity).</text>
</comment>
<comment type="interaction">
    <interactant intactId="EBI-7987134">
        <id>A2A9T0</id>
    </interactant>
    <interactant intactId="EBI-764193">
        <id>Q9WUN2</id>
        <label>Tbk1</label>
    </interactant>
    <organismsDiffer>false</organismsDiffer>
    <experiments>2</experiments>
</comment>
<comment type="alternative products">
    <event type="alternative splicing"/>
    <isoform>
        <id>A2A9T0-1</id>
        <name>1</name>
        <sequence type="displayed"/>
    </isoform>
    <isoform>
        <id>A2A9T0-2</id>
        <name evidence="5">2</name>
        <sequence type="described" ref="VSP_032344 VSP_052716"/>
    </isoform>
</comment>
<name>TBKB1_MOUSE</name>
<feature type="chain" id="PRO_0000324655" description="TANK-binding kinase 1-binding protein 1">
    <location>
        <begin position="1"/>
        <end position="611"/>
    </location>
</feature>
<feature type="zinc finger region" description="UBZ1-type" evidence="3">
    <location>
        <begin position="579"/>
        <end position="605"/>
    </location>
</feature>
<feature type="region of interest" description="Homodimerization">
    <location>
        <begin position="1"/>
        <end position="280"/>
    </location>
</feature>
<feature type="region of interest" description="Interaction with TBK1 and IKBKE" evidence="6">
    <location>
        <begin position="281"/>
        <end position="330"/>
    </location>
</feature>
<feature type="region of interest" description="Disordered" evidence="4">
    <location>
        <begin position="328"/>
        <end position="437"/>
    </location>
</feature>
<feature type="coiled-coil region" evidence="2">
    <location>
        <begin position="48"/>
        <end position="162"/>
    </location>
</feature>
<feature type="coiled-coil region" evidence="2">
    <location>
        <begin position="218"/>
        <end position="277"/>
    </location>
</feature>
<feature type="compositionally biased region" description="Pro residues" evidence="4">
    <location>
        <begin position="346"/>
        <end position="361"/>
    </location>
</feature>
<feature type="compositionally biased region" description="Low complexity" evidence="4">
    <location>
        <begin position="362"/>
        <end position="372"/>
    </location>
</feature>
<feature type="compositionally biased region" description="Pro residues" evidence="4">
    <location>
        <begin position="389"/>
        <end position="406"/>
    </location>
</feature>
<feature type="compositionally biased region" description="Pro residues" evidence="4">
    <location>
        <begin position="416"/>
        <end position="433"/>
    </location>
</feature>
<feature type="binding site" evidence="3">
    <location>
        <position position="582"/>
    </location>
    <ligand>
        <name>Zn(2+)</name>
        <dbReference type="ChEBI" id="CHEBI:29105"/>
    </ligand>
</feature>
<feature type="binding site" evidence="3">
    <location>
        <position position="585"/>
    </location>
    <ligand>
        <name>Zn(2+)</name>
        <dbReference type="ChEBI" id="CHEBI:29105"/>
    </ligand>
</feature>
<feature type="binding site" evidence="3">
    <location>
        <position position="601"/>
    </location>
    <ligand>
        <name>Zn(2+)</name>
        <dbReference type="ChEBI" id="CHEBI:29105"/>
    </ligand>
</feature>
<feature type="binding site" evidence="3">
    <location>
        <position position="605"/>
    </location>
    <ligand>
        <name>Zn(2+)</name>
        <dbReference type="ChEBI" id="CHEBI:29105"/>
    </ligand>
</feature>
<feature type="modified residue" description="Phosphoserine" evidence="1">
    <location>
        <position position="184"/>
    </location>
</feature>
<feature type="modified residue" description="Phosphoserine" evidence="1">
    <location>
        <position position="365"/>
    </location>
</feature>
<feature type="modified residue" description="Phosphoserine" evidence="1">
    <location>
        <position position="372"/>
    </location>
</feature>
<feature type="modified residue" description="Phosphoserine" evidence="1">
    <location>
        <position position="379"/>
    </location>
</feature>
<feature type="modified residue" description="Phosphoserine" evidence="1">
    <location>
        <position position="385"/>
    </location>
</feature>
<feature type="modified residue" description="Phosphoserine" evidence="12">
    <location>
        <position position="400"/>
    </location>
</feature>
<feature type="modified residue" description="Phosphoserine" evidence="1">
    <location>
        <position position="415"/>
    </location>
</feature>
<feature type="modified residue" description="Phosphoserine" evidence="1">
    <location>
        <position position="500"/>
    </location>
</feature>
<feature type="modified residue" description="Phosphoserine" evidence="1">
    <location>
        <position position="530"/>
    </location>
</feature>
<feature type="splice variant" id="VSP_032344" description="In isoform 2." evidence="7">
    <location>
        <position position="212"/>
    </location>
</feature>
<feature type="splice variant" id="VSP_052716" description="In isoform 2." evidence="7">
    <location>
        <begin position="364"/>
        <end position="377"/>
    </location>
</feature>